<feature type="chain" id="PRO_1000090440" description="UDP-N-acetylglucosamine--N-acetylmuramyl-(pentapeptide) pyrophosphoryl-undecaprenol N-acetylglucosamine transferase">
    <location>
        <begin position="1"/>
        <end position="353"/>
    </location>
</feature>
<feature type="binding site" evidence="1">
    <location>
        <begin position="10"/>
        <end position="12"/>
    </location>
    <ligand>
        <name>UDP-N-acetyl-alpha-D-glucosamine</name>
        <dbReference type="ChEBI" id="CHEBI:57705"/>
    </ligand>
</feature>
<feature type="binding site" evidence="1">
    <location>
        <position position="124"/>
    </location>
    <ligand>
        <name>UDP-N-acetyl-alpha-D-glucosamine</name>
        <dbReference type="ChEBI" id="CHEBI:57705"/>
    </ligand>
</feature>
<feature type="binding site" evidence="1">
    <location>
        <position position="183"/>
    </location>
    <ligand>
        <name>UDP-N-acetyl-alpha-D-glucosamine</name>
        <dbReference type="ChEBI" id="CHEBI:57705"/>
    </ligand>
</feature>
<feature type="binding site" evidence="1">
    <location>
        <position position="283"/>
    </location>
    <ligand>
        <name>UDP-N-acetyl-alpha-D-glucosamine</name>
        <dbReference type="ChEBI" id="CHEBI:57705"/>
    </ligand>
</feature>
<organism>
    <name type="scientific">Helicobacter pylori (strain Shi470)</name>
    <dbReference type="NCBI Taxonomy" id="512562"/>
    <lineage>
        <taxon>Bacteria</taxon>
        <taxon>Pseudomonadati</taxon>
        <taxon>Campylobacterota</taxon>
        <taxon>Epsilonproteobacteria</taxon>
        <taxon>Campylobacterales</taxon>
        <taxon>Helicobacteraceae</taxon>
        <taxon>Helicobacter</taxon>
    </lineage>
</organism>
<keyword id="KW-0131">Cell cycle</keyword>
<keyword id="KW-0132">Cell division</keyword>
<keyword id="KW-0997">Cell inner membrane</keyword>
<keyword id="KW-1003">Cell membrane</keyword>
<keyword id="KW-0133">Cell shape</keyword>
<keyword id="KW-0961">Cell wall biogenesis/degradation</keyword>
<keyword id="KW-0328">Glycosyltransferase</keyword>
<keyword id="KW-0472">Membrane</keyword>
<keyword id="KW-0573">Peptidoglycan synthesis</keyword>
<keyword id="KW-0808">Transferase</keyword>
<proteinExistence type="inferred from homology"/>
<accession>B2UUR4</accession>
<gene>
    <name evidence="1" type="primary">murG</name>
    <name type="ordered locus">HPSH_05960</name>
</gene>
<name>MURG_HELPS</name>
<sequence length="353" mass="39455">MKFALTGGGTGGHLSIAKALAIELEKQGIEAIYLGSTYGQDKEWFENSPLFSERYFFNTQGVVNKSFFKKIGSLFLQAKAAFKAKEILKKHQITHTISVGGFSAGPASFASLLNKIPLYIHEQNAIKGSLNRYLSPKAKAVFSSYAFKDKGNHVLTSYPVQNAFFDFARTRTEIKHILFLGGSQGAKAINEFALLNAPKLTKQGIKITHICGSDAHERMRFFYQELGLLDKVELFAFHNNITEVMHRADLCVSRAGASSVWELCANGLPTIFIPYPFASNNHQYYNVLEFEKENLCYVVPQNELLPKKLFEVIRKLNQKDDQGNKNLTTISNQLQQKIAKDGAKTIIETILSA</sequence>
<dbReference type="EC" id="2.4.1.227" evidence="1"/>
<dbReference type="EMBL" id="CP001072">
    <property type="protein sequence ID" value="ACD48596.1"/>
    <property type="molecule type" value="Genomic_DNA"/>
</dbReference>
<dbReference type="RefSeq" id="WP_000666584.1">
    <property type="nucleotide sequence ID" value="NC_010698.2"/>
</dbReference>
<dbReference type="SMR" id="B2UUR4"/>
<dbReference type="CAZy" id="GT28">
    <property type="family name" value="Glycosyltransferase Family 28"/>
</dbReference>
<dbReference type="KEGG" id="hps:HPSH_05960"/>
<dbReference type="HOGENOM" id="CLU_037404_2_1_7"/>
<dbReference type="UniPathway" id="UPA00219"/>
<dbReference type="GO" id="GO:0005886">
    <property type="term" value="C:plasma membrane"/>
    <property type="evidence" value="ECO:0007669"/>
    <property type="project" value="UniProtKB-SubCell"/>
</dbReference>
<dbReference type="GO" id="GO:0051991">
    <property type="term" value="F:UDP-N-acetyl-D-glucosamine:N-acetylmuramoyl-L-alanyl-D-glutamyl-meso-2,6-diaminopimelyl-D-alanyl-D-alanine-diphosphoundecaprenol 4-beta-N-acetylglucosaminlytransferase activity"/>
    <property type="evidence" value="ECO:0007669"/>
    <property type="project" value="RHEA"/>
</dbReference>
<dbReference type="GO" id="GO:0050511">
    <property type="term" value="F:undecaprenyldiphospho-muramoylpentapeptide beta-N-acetylglucosaminyltransferase activity"/>
    <property type="evidence" value="ECO:0007669"/>
    <property type="project" value="UniProtKB-UniRule"/>
</dbReference>
<dbReference type="GO" id="GO:0005975">
    <property type="term" value="P:carbohydrate metabolic process"/>
    <property type="evidence" value="ECO:0007669"/>
    <property type="project" value="InterPro"/>
</dbReference>
<dbReference type="GO" id="GO:0051301">
    <property type="term" value="P:cell division"/>
    <property type="evidence" value="ECO:0007669"/>
    <property type="project" value="UniProtKB-KW"/>
</dbReference>
<dbReference type="GO" id="GO:0071555">
    <property type="term" value="P:cell wall organization"/>
    <property type="evidence" value="ECO:0007669"/>
    <property type="project" value="UniProtKB-KW"/>
</dbReference>
<dbReference type="GO" id="GO:0030259">
    <property type="term" value="P:lipid glycosylation"/>
    <property type="evidence" value="ECO:0007669"/>
    <property type="project" value="UniProtKB-UniRule"/>
</dbReference>
<dbReference type="GO" id="GO:0009252">
    <property type="term" value="P:peptidoglycan biosynthetic process"/>
    <property type="evidence" value="ECO:0007669"/>
    <property type="project" value="UniProtKB-UniRule"/>
</dbReference>
<dbReference type="GO" id="GO:0008360">
    <property type="term" value="P:regulation of cell shape"/>
    <property type="evidence" value="ECO:0007669"/>
    <property type="project" value="UniProtKB-KW"/>
</dbReference>
<dbReference type="CDD" id="cd03785">
    <property type="entry name" value="GT28_MurG"/>
    <property type="match status" value="1"/>
</dbReference>
<dbReference type="Gene3D" id="3.40.50.2000">
    <property type="entry name" value="Glycogen Phosphorylase B"/>
    <property type="match status" value="2"/>
</dbReference>
<dbReference type="HAMAP" id="MF_00033">
    <property type="entry name" value="MurG"/>
    <property type="match status" value="1"/>
</dbReference>
<dbReference type="InterPro" id="IPR006009">
    <property type="entry name" value="GlcNAc_MurG"/>
</dbReference>
<dbReference type="InterPro" id="IPR007235">
    <property type="entry name" value="Glyco_trans_28_C"/>
</dbReference>
<dbReference type="InterPro" id="IPR004276">
    <property type="entry name" value="GlycoTrans_28_N"/>
</dbReference>
<dbReference type="NCBIfam" id="TIGR01133">
    <property type="entry name" value="murG"/>
    <property type="match status" value="1"/>
</dbReference>
<dbReference type="PANTHER" id="PTHR21015:SF22">
    <property type="entry name" value="GLYCOSYLTRANSFERASE"/>
    <property type="match status" value="1"/>
</dbReference>
<dbReference type="PANTHER" id="PTHR21015">
    <property type="entry name" value="UDP-N-ACETYLGLUCOSAMINE--N-ACETYLMURAMYL-(PENTAPEPTIDE) PYROPHOSPHORYL-UNDECAPRENOL N-ACETYLGLUCOSAMINE TRANSFERASE 1"/>
    <property type="match status" value="1"/>
</dbReference>
<dbReference type="Pfam" id="PF04101">
    <property type="entry name" value="Glyco_tran_28_C"/>
    <property type="match status" value="1"/>
</dbReference>
<dbReference type="Pfam" id="PF03033">
    <property type="entry name" value="Glyco_transf_28"/>
    <property type="match status" value="1"/>
</dbReference>
<dbReference type="SUPFAM" id="SSF53756">
    <property type="entry name" value="UDP-Glycosyltransferase/glycogen phosphorylase"/>
    <property type="match status" value="1"/>
</dbReference>
<evidence type="ECO:0000255" key="1">
    <source>
        <dbReference type="HAMAP-Rule" id="MF_00033"/>
    </source>
</evidence>
<protein>
    <recommendedName>
        <fullName evidence="1">UDP-N-acetylglucosamine--N-acetylmuramyl-(pentapeptide) pyrophosphoryl-undecaprenol N-acetylglucosamine transferase</fullName>
        <ecNumber evidence="1">2.4.1.227</ecNumber>
    </recommendedName>
    <alternativeName>
        <fullName evidence="1">Undecaprenyl-PP-MurNAc-pentapeptide-UDPGlcNAc GlcNAc transferase</fullName>
    </alternativeName>
</protein>
<comment type="function">
    <text evidence="1">Cell wall formation. Catalyzes the transfer of a GlcNAc subunit on undecaprenyl-pyrophosphoryl-MurNAc-pentapeptide (lipid intermediate I) to form undecaprenyl-pyrophosphoryl-MurNAc-(pentapeptide)GlcNAc (lipid intermediate II).</text>
</comment>
<comment type="catalytic activity">
    <reaction evidence="1">
        <text>di-trans,octa-cis-undecaprenyl diphospho-N-acetyl-alpha-D-muramoyl-L-alanyl-D-glutamyl-meso-2,6-diaminopimeloyl-D-alanyl-D-alanine + UDP-N-acetyl-alpha-D-glucosamine = di-trans,octa-cis-undecaprenyl diphospho-[N-acetyl-alpha-D-glucosaminyl-(1-&gt;4)]-N-acetyl-alpha-D-muramoyl-L-alanyl-D-glutamyl-meso-2,6-diaminopimeloyl-D-alanyl-D-alanine + UDP + H(+)</text>
        <dbReference type="Rhea" id="RHEA:31227"/>
        <dbReference type="ChEBI" id="CHEBI:15378"/>
        <dbReference type="ChEBI" id="CHEBI:57705"/>
        <dbReference type="ChEBI" id="CHEBI:58223"/>
        <dbReference type="ChEBI" id="CHEBI:61387"/>
        <dbReference type="ChEBI" id="CHEBI:61388"/>
        <dbReference type="EC" id="2.4.1.227"/>
    </reaction>
</comment>
<comment type="pathway">
    <text evidence="1">Cell wall biogenesis; peptidoglycan biosynthesis.</text>
</comment>
<comment type="subcellular location">
    <subcellularLocation>
        <location evidence="1">Cell inner membrane</location>
        <topology evidence="1">Peripheral membrane protein</topology>
        <orientation evidence="1">Cytoplasmic side</orientation>
    </subcellularLocation>
</comment>
<comment type="similarity">
    <text evidence="1">Belongs to the glycosyltransferase 28 family. MurG subfamily.</text>
</comment>
<reference key="1">
    <citation type="submission" date="2008-05" db="EMBL/GenBank/DDBJ databases">
        <title>Genome sequence of Helicobacter pylori from the remote Amazon: traces of Asian ancestry of the first Americans.</title>
        <authorList>
            <person name="Kersulyte D."/>
            <person name="Kalia A."/>
            <person name="Gilman R.H."/>
            <person name="Berg D.E."/>
        </authorList>
    </citation>
    <scope>NUCLEOTIDE SEQUENCE [LARGE SCALE GENOMIC DNA]</scope>
    <source>
        <strain>Shi470</strain>
    </source>
</reference>